<protein>
    <recommendedName>
        <fullName evidence="1">Large ribosomal subunit protein uL29</fullName>
    </recommendedName>
    <alternativeName>
        <fullName evidence="2">50S ribosomal protein L29</fullName>
    </alternativeName>
</protein>
<accession>Q0RRR3</accession>
<sequence>MMAVATADELRSLSGDELVDKLREAKEELFNLRFQAATGQLSNNRRLRAVRRDIAKIYTVMRERELGITGDPALVAGAADDDATQSERA</sequence>
<feature type="chain" id="PRO_1000007483" description="Large ribosomal subunit protein uL29">
    <location>
        <begin position="1"/>
        <end position="89"/>
    </location>
</feature>
<reference key="1">
    <citation type="journal article" date="2007" name="Genome Res.">
        <title>Genome characteristics of facultatively symbiotic Frankia sp. strains reflect host range and host plant biogeography.</title>
        <authorList>
            <person name="Normand P."/>
            <person name="Lapierre P."/>
            <person name="Tisa L.S."/>
            <person name="Gogarten J.P."/>
            <person name="Alloisio N."/>
            <person name="Bagnarol E."/>
            <person name="Bassi C.A."/>
            <person name="Berry A.M."/>
            <person name="Bickhart D.M."/>
            <person name="Choisne N."/>
            <person name="Couloux A."/>
            <person name="Cournoyer B."/>
            <person name="Cruveiller S."/>
            <person name="Daubin V."/>
            <person name="Demange N."/>
            <person name="Francino M.P."/>
            <person name="Goltsman E."/>
            <person name="Huang Y."/>
            <person name="Kopp O.R."/>
            <person name="Labarre L."/>
            <person name="Lapidus A."/>
            <person name="Lavire C."/>
            <person name="Marechal J."/>
            <person name="Martinez M."/>
            <person name="Mastronunzio J.E."/>
            <person name="Mullin B.C."/>
            <person name="Niemann J."/>
            <person name="Pujic P."/>
            <person name="Rawnsley T."/>
            <person name="Rouy Z."/>
            <person name="Schenowitz C."/>
            <person name="Sellstedt A."/>
            <person name="Tavares F."/>
            <person name="Tomkins J.P."/>
            <person name="Vallenet D."/>
            <person name="Valverde C."/>
            <person name="Wall L.G."/>
            <person name="Wang Y."/>
            <person name="Medigue C."/>
            <person name="Benson D.R."/>
        </authorList>
    </citation>
    <scope>NUCLEOTIDE SEQUENCE [LARGE SCALE GENOMIC DNA]</scope>
    <source>
        <strain>DSM 45986 / CECT 9034 / ACN14a</strain>
    </source>
</reference>
<gene>
    <name evidence="1" type="primary">rpmC</name>
    <name type="ordered locus">FRAAL1089</name>
</gene>
<evidence type="ECO:0000255" key="1">
    <source>
        <dbReference type="HAMAP-Rule" id="MF_00374"/>
    </source>
</evidence>
<evidence type="ECO:0000305" key="2"/>
<proteinExistence type="inferred from homology"/>
<dbReference type="EMBL" id="CT573213">
    <property type="protein sequence ID" value="CAJ59754.1"/>
    <property type="molecule type" value="Genomic_DNA"/>
</dbReference>
<dbReference type="RefSeq" id="WP_011602304.1">
    <property type="nucleotide sequence ID" value="NC_008278.1"/>
</dbReference>
<dbReference type="SMR" id="Q0RRR3"/>
<dbReference type="STRING" id="326424.FRAAL1089"/>
<dbReference type="KEGG" id="fal:FRAAL1089"/>
<dbReference type="eggNOG" id="COG0255">
    <property type="taxonomic scope" value="Bacteria"/>
</dbReference>
<dbReference type="HOGENOM" id="CLU_158491_3_0_11"/>
<dbReference type="OrthoDB" id="9815192at2"/>
<dbReference type="Proteomes" id="UP000000657">
    <property type="component" value="Chromosome"/>
</dbReference>
<dbReference type="GO" id="GO:0022625">
    <property type="term" value="C:cytosolic large ribosomal subunit"/>
    <property type="evidence" value="ECO:0007669"/>
    <property type="project" value="TreeGrafter"/>
</dbReference>
<dbReference type="GO" id="GO:0003735">
    <property type="term" value="F:structural constituent of ribosome"/>
    <property type="evidence" value="ECO:0007669"/>
    <property type="project" value="InterPro"/>
</dbReference>
<dbReference type="GO" id="GO:0006412">
    <property type="term" value="P:translation"/>
    <property type="evidence" value="ECO:0007669"/>
    <property type="project" value="UniProtKB-UniRule"/>
</dbReference>
<dbReference type="CDD" id="cd00427">
    <property type="entry name" value="Ribosomal_L29_HIP"/>
    <property type="match status" value="1"/>
</dbReference>
<dbReference type="FunFam" id="1.10.287.310:FF:000001">
    <property type="entry name" value="50S ribosomal protein L29"/>
    <property type="match status" value="1"/>
</dbReference>
<dbReference type="Gene3D" id="1.10.287.310">
    <property type="match status" value="1"/>
</dbReference>
<dbReference type="HAMAP" id="MF_00374">
    <property type="entry name" value="Ribosomal_uL29"/>
    <property type="match status" value="1"/>
</dbReference>
<dbReference type="InterPro" id="IPR050063">
    <property type="entry name" value="Ribosomal_protein_uL29"/>
</dbReference>
<dbReference type="InterPro" id="IPR001854">
    <property type="entry name" value="Ribosomal_uL29"/>
</dbReference>
<dbReference type="InterPro" id="IPR018254">
    <property type="entry name" value="Ribosomal_uL29_CS"/>
</dbReference>
<dbReference type="InterPro" id="IPR036049">
    <property type="entry name" value="Ribosomal_uL29_sf"/>
</dbReference>
<dbReference type="NCBIfam" id="TIGR00012">
    <property type="entry name" value="L29"/>
    <property type="match status" value="1"/>
</dbReference>
<dbReference type="PANTHER" id="PTHR10916">
    <property type="entry name" value="60S RIBOSOMAL PROTEIN L35/50S RIBOSOMAL PROTEIN L29"/>
    <property type="match status" value="1"/>
</dbReference>
<dbReference type="PANTHER" id="PTHR10916:SF0">
    <property type="entry name" value="LARGE RIBOSOMAL SUBUNIT PROTEIN UL29C"/>
    <property type="match status" value="1"/>
</dbReference>
<dbReference type="Pfam" id="PF00831">
    <property type="entry name" value="Ribosomal_L29"/>
    <property type="match status" value="1"/>
</dbReference>
<dbReference type="SUPFAM" id="SSF46561">
    <property type="entry name" value="Ribosomal protein L29 (L29p)"/>
    <property type="match status" value="1"/>
</dbReference>
<dbReference type="PROSITE" id="PS00579">
    <property type="entry name" value="RIBOSOMAL_L29"/>
    <property type="match status" value="1"/>
</dbReference>
<organism>
    <name type="scientific">Frankia alni (strain DSM 45986 / CECT 9034 / ACN14a)</name>
    <dbReference type="NCBI Taxonomy" id="326424"/>
    <lineage>
        <taxon>Bacteria</taxon>
        <taxon>Bacillati</taxon>
        <taxon>Actinomycetota</taxon>
        <taxon>Actinomycetes</taxon>
        <taxon>Frankiales</taxon>
        <taxon>Frankiaceae</taxon>
        <taxon>Frankia</taxon>
    </lineage>
</organism>
<keyword id="KW-1185">Reference proteome</keyword>
<keyword id="KW-0687">Ribonucleoprotein</keyword>
<keyword id="KW-0689">Ribosomal protein</keyword>
<name>RL29_FRAAA</name>
<comment type="similarity">
    <text evidence="1">Belongs to the universal ribosomal protein uL29 family.</text>
</comment>